<reference key="1">
    <citation type="journal article" date="1997" name="Nature">
        <title>The nucleotide sequence of Saccharomyces cerevisiae chromosome VII.</title>
        <authorList>
            <person name="Tettelin H."/>
            <person name="Agostoni-Carbone M.L."/>
            <person name="Albermann K."/>
            <person name="Albers M."/>
            <person name="Arroyo J."/>
            <person name="Backes U."/>
            <person name="Barreiros T."/>
            <person name="Bertani I."/>
            <person name="Bjourson A.J."/>
            <person name="Brueckner M."/>
            <person name="Bruschi C.V."/>
            <person name="Carignani G."/>
            <person name="Castagnoli L."/>
            <person name="Cerdan E."/>
            <person name="Clemente M.L."/>
            <person name="Coblenz A."/>
            <person name="Coglievina M."/>
            <person name="Coissac E."/>
            <person name="Defoor E."/>
            <person name="Del Bino S."/>
            <person name="Delius H."/>
            <person name="Delneri D."/>
            <person name="de Wergifosse P."/>
            <person name="Dujon B."/>
            <person name="Durand P."/>
            <person name="Entian K.-D."/>
            <person name="Eraso P."/>
            <person name="Escribano V."/>
            <person name="Fabiani L."/>
            <person name="Fartmann B."/>
            <person name="Feroli F."/>
            <person name="Feuermann M."/>
            <person name="Frontali L."/>
            <person name="Garcia-Gonzalez M."/>
            <person name="Garcia-Saez M.I."/>
            <person name="Goffeau A."/>
            <person name="Guerreiro P."/>
            <person name="Hani J."/>
            <person name="Hansen M."/>
            <person name="Hebling U."/>
            <person name="Hernandez K."/>
            <person name="Heumann K."/>
            <person name="Hilger F."/>
            <person name="Hofmann B."/>
            <person name="Indge K.J."/>
            <person name="James C.M."/>
            <person name="Klima R."/>
            <person name="Koetter P."/>
            <person name="Kramer B."/>
            <person name="Kramer W."/>
            <person name="Lauquin G."/>
            <person name="Leuther H."/>
            <person name="Louis E.J."/>
            <person name="Maillier E."/>
            <person name="Marconi A."/>
            <person name="Martegani E."/>
            <person name="Mazon M.J."/>
            <person name="Mazzoni C."/>
            <person name="McReynolds A.D.K."/>
            <person name="Melchioretto P."/>
            <person name="Mewes H.-W."/>
            <person name="Minenkova O."/>
            <person name="Mueller-Auer S."/>
            <person name="Nawrocki A."/>
            <person name="Netter P."/>
            <person name="Neu R."/>
            <person name="Nombela C."/>
            <person name="Oliver S.G."/>
            <person name="Panzeri L."/>
            <person name="Paoluzi S."/>
            <person name="Plevani P."/>
            <person name="Portetelle D."/>
            <person name="Portillo F."/>
            <person name="Potier S."/>
            <person name="Purnelle B."/>
            <person name="Rieger M."/>
            <person name="Riles L."/>
            <person name="Rinaldi T."/>
            <person name="Robben J."/>
            <person name="Rodrigues-Pousada C."/>
            <person name="Rodriguez-Belmonte E."/>
            <person name="Rodriguez-Torres A.M."/>
            <person name="Rose M."/>
            <person name="Ruzzi M."/>
            <person name="Saliola M."/>
            <person name="Sanchez-Perez M."/>
            <person name="Schaefer B."/>
            <person name="Schaefer M."/>
            <person name="Scharfe M."/>
            <person name="Schmidheini T."/>
            <person name="Schreer A."/>
            <person name="Skala J."/>
            <person name="Souciet J.-L."/>
            <person name="Steensma H.Y."/>
            <person name="Talla E."/>
            <person name="Thierry A."/>
            <person name="Vandenbol M."/>
            <person name="van der Aart Q.J.M."/>
            <person name="Van Dyck L."/>
            <person name="Vanoni M."/>
            <person name="Verhasselt P."/>
            <person name="Voet M."/>
            <person name="Volckaert G."/>
            <person name="Wambutt R."/>
            <person name="Watson M.D."/>
            <person name="Weber N."/>
            <person name="Wedler E."/>
            <person name="Wedler H."/>
            <person name="Wipfli P."/>
            <person name="Wolf K."/>
            <person name="Wright L.F."/>
            <person name="Zaccaria P."/>
            <person name="Zimmermann M."/>
            <person name="Zollner A."/>
            <person name="Kleine K."/>
        </authorList>
    </citation>
    <scope>NUCLEOTIDE SEQUENCE [LARGE SCALE GENOMIC DNA]</scope>
    <source>
        <strain>ATCC 204508 / S288c</strain>
    </source>
</reference>
<reference key="2">
    <citation type="journal article" date="2014" name="G3 (Bethesda)">
        <title>The reference genome sequence of Saccharomyces cerevisiae: Then and now.</title>
        <authorList>
            <person name="Engel S.R."/>
            <person name="Dietrich F.S."/>
            <person name="Fisk D.G."/>
            <person name="Binkley G."/>
            <person name="Balakrishnan R."/>
            <person name="Costanzo M.C."/>
            <person name="Dwight S.S."/>
            <person name="Hitz B.C."/>
            <person name="Karra K."/>
            <person name="Nash R.S."/>
            <person name="Weng S."/>
            <person name="Wong E.D."/>
            <person name="Lloyd P."/>
            <person name="Skrzypek M.S."/>
            <person name="Miyasato S.R."/>
            <person name="Simison M."/>
            <person name="Cherry J.M."/>
        </authorList>
    </citation>
    <scope>GENOME REANNOTATION</scope>
    <source>
        <strain>ATCC 204508 / S288c</strain>
    </source>
</reference>
<sequence length="123" mass="14066">MVLPLMFMYCKLAMLSLAVGCCPPVKYRLAIAIPLLFNLFSRGCGRVNFTSVKIAFICGDTDCSVPQTVVPFFSSMVTCSLRSFFKKLTNFIIFFSTIYKRYLESSFFMTISLYMNISYILLF</sequence>
<comment type="subcellular location">
    <subcellularLocation>
        <location evidence="2">Membrane</location>
        <topology evidence="2">Multi-pass membrane protein</topology>
    </subcellularLocation>
</comment>
<comment type="miscellaneous">
    <text evidence="2">Partially overlaps SMD1.</text>
</comment>
<comment type="caution">
    <text evidence="3">Product of a dubious gene prediction unlikely to encode a functional protein. Because of that it is not part of the S.cerevisiae S288c complete/reference proteome set.</text>
</comment>
<name>YG2E_YEAST</name>
<feature type="chain" id="PRO_0000202807" description="Putative uncharacterized protein YGR073C">
    <location>
        <begin position="1"/>
        <end position="123"/>
    </location>
</feature>
<feature type="transmembrane region" description="Helical" evidence="1">
    <location>
        <begin position="1"/>
        <end position="21"/>
    </location>
</feature>
<feature type="transmembrane region" description="Helical" evidence="1">
    <location>
        <begin position="103"/>
        <end position="123"/>
    </location>
</feature>
<protein>
    <recommendedName>
        <fullName>Putative uncharacterized protein YGR073C</fullName>
    </recommendedName>
</protein>
<evidence type="ECO:0000255" key="1"/>
<evidence type="ECO:0000305" key="2"/>
<evidence type="ECO:0000305" key="3">
    <source>
    </source>
</evidence>
<organism>
    <name type="scientific">Saccharomyces cerevisiae (strain ATCC 204508 / S288c)</name>
    <name type="common">Baker's yeast</name>
    <dbReference type="NCBI Taxonomy" id="559292"/>
    <lineage>
        <taxon>Eukaryota</taxon>
        <taxon>Fungi</taxon>
        <taxon>Dikarya</taxon>
        <taxon>Ascomycota</taxon>
        <taxon>Saccharomycotina</taxon>
        <taxon>Saccharomycetes</taxon>
        <taxon>Saccharomycetales</taxon>
        <taxon>Saccharomycetaceae</taxon>
        <taxon>Saccharomyces</taxon>
    </lineage>
</organism>
<proteinExistence type="uncertain"/>
<accession>P53247</accession>
<keyword id="KW-0472">Membrane</keyword>
<keyword id="KW-0812">Transmembrane</keyword>
<keyword id="KW-1133">Transmembrane helix</keyword>
<gene>
    <name type="ordered locus">YGR073C</name>
</gene>
<dbReference type="EMBL" id="Z72858">
    <property type="protein sequence ID" value="CAA97075.1"/>
    <property type="molecule type" value="Genomic_DNA"/>
</dbReference>
<dbReference type="PIR" id="S64368">
    <property type="entry name" value="S64368"/>
</dbReference>
<dbReference type="DIP" id="DIP-4579N"/>
<dbReference type="PaxDb" id="4932-YGR073C"/>
<dbReference type="EnsemblFungi" id="YGR073C_mRNA">
    <property type="protein sequence ID" value="YGR073C"/>
    <property type="gene ID" value="YGR073C"/>
</dbReference>
<dbReference type="AGR" id="SGD:S000003305"/>
<dbReference type="SGD" id="S000003305">
    <property type="gene designation" value="YGR073C"/>
</dbReference>
<dbReference type="HOGENOM" id="CLU_2028533_0_0_1"/>
<dbReference type="GO" id="GO:0016020">
    <property type="term" value="C:membrane"/>
    <property type="evidence" value="ECO:0007669"/>
    <property type="project" value="UniProtKB-SubCell"/>
</dbReference>